<gene>
    <name evidence="1" type="primary">mnmE</name>
    <name evidence="1" type="synonym">trmE</name>
    <name type="ordered locus">PMN2A_1556</name>
</gene>
<name>MNME_PROMT</name>
<protein>
    <recommendedName>
        <fullName evidence="1">tRNA modification GTPase MnmE</fullName>
        <ecNumber evidence="1">3.6.-.-</ecNumber>
    </recommendedName>
</protein>
<accession>Q46HI4</accession>
<evidence type="ECO:0000255" key="1">
    <source>
        <dbReference type="HAMAP-Rule" id="MF_00379"/>
    </source>
</evidence>
<dbReference type="EC" id="3.6.-.-" evidence="1"/>
<dbReference type="EMBL" id="CP000095">
    <property type="protein sequence ID" value="AAZ59044.1"/>
    <property type="molecule type" value="Genomic_DNA"/>
</dbReference>
<dbReference type="RefSeq" id="WP_011294189.1">
    <property type="nucleotide sequence ID" value="NC_007335.2"/>
</dbReference>
<dbReference type="SMR" id="Q46HI4"/>
<dbReference type="STRING" id="59920.PMN2A_1556"/>
<dbReference type="KEGG" id="pmn:PMN2A_1556"/>
<dbReference type="HOGENOM" id="CLU_019624_4_1_3"/>
<dbReference type="OrthoDB" id="9805918at2"/>
<dbReference type="PhylomeDB" id="Q46HI4"/>
<dbReference type="Proteomes" id="UP000002535">
    <property type="component" value="Chromosome"/>
</dbReference>
<dbReference type="GO" id="GO:0005829">
    <property type="term" value="C:cytosol"/>
    <property type="evidence" value="ECO:0007669"/>
    <property type="project" value="TreeGrafter"/>
</dbReference>
<dbReference type="GO" id="GO:0005525">
    <property type="term" value="F:GTP binding"/>
    <property type="evidence" value="ECO:0007669"/>
    <property type="project" value="UniProtKB-UniRule"/>
</dbReference>
<dbReference type="GO" id="GO:0003924">
    <property type="term" value="F:GTPase activity"/>
    <property type="evidence" value="ECO:0007669"/>
    <property type="project" value="UniProtKB-UniRule"/>
</dbReference>
<dbReference type="GO" id="GO:0046872">
    <property type="term" value="F:metal ion binding"/>
    <property type="evidence" value="ECO:0007669"/>
    <property type="project" value="UniProtKB-KW"/>
</dbReference>
<dbReference type="GO" id="GO:0030488">
    <property type="term" value="P:tRNA methylation"/>
    <property type="evidence" value="ECO:0007669"/>
    <property type="project" value="TreeGrafter"/>
</dbReference>
<dbReference type="GO" id="GO:0002098">
    <property type="term" value="P:tRNA wobble uridine modification"/>
    <property type="evidence" value="ECO:0007669"/>
    <property type="project" value="TreeGrafter"/>
</dbReference>
<dbReference type="CDD" id="cd04164">
    <property type="entry name" value="trmE"/>
    <property type="match status" value="1"/>
</dbReference>
<dbReference type="CDD" id="cd14858">
    <property type="entry name" value="TrmE_N"/>
    <property type="match status" value="1"/>
</dbReference>
<dbReference type="FunFam" id="3.40.50.300:FF:000494">
    <property type="entry name" value="tRNA modification GTPase MnmE"/>
    <property type="match status" value="1"/>
</dbReference>
<dbReference type="Gene3D" id="3.40.50.300">
    <property type="entry name" value="P-loop containing nucleotide triphosphate hydrolases"/>
    <property type="match status" value="1"/>
</dbReference>
<dbReference type="Gene3D" id="3.30.1360.120">
    <property type="entry name" value="Probable tRNA modification gtpase trme, domain 1"/>
    <property type="match status" value="1"/>
</dbReference>
<dbReference type="Gene3D" id="1.20.120.430">
    <property type="entry name" value="tRNA modification GTPase MnmE domain 2"/>
    <property type="match status" value="1"/>
</dbReference>
<dbReference type="HAMAP" id="MF_00379">
    <property type="entry name" value="GTPase_MnmE"/>
    <property type="match status" value="1"/>
</dbReference>
<dbReference type="InterPro" id="IPR031168">
    <property type="entry name" value="G_TrmE"/>
</dbReference>
<dbReference type="InterPro" id="IPR006073">
    <property type="entry name" value="GTP-bd"/>
</dbReference>
<dbReference type="InterPro" id="IPR018948">
    <property type="entry name" value="GTP-bd_TrmE_N"/>
</dbReference>
<dbReference type="InterPro" id="IPR004520">
    <property type="entry name" value="GTPase_MnmE"/>
</dbReference>
<dbReference type="InterPro" id="IPR027368">
    <property type="entry name" value="MnmE_dom2"/>
</dbReference>
<dbReference type="InterPro" id="IPR025867">
    <property type="entry name" value="MnmE_helical"/>
</dbReference>
<dbReference type="InterPro" id="IPR027417">
    <property type="entry name" value="P-loop_NTPase"/>
</dbReference>
<dbReference type="InterPro" id="IPR005225">
    <property type="entry name" value="Small_GTP-bd"/>
</dbReference>
<dbReference type="InterPro" id="IPR027266">
    <property type="entry name" value="TrmE/GcvT_dom1"/>
</dbReference>
<dbReference type="NCBIfam" id="TIGR00450">
    <property type="entry name" value="mnmE_trmE_thdF"/>
    <property type="match status" value="1"/>
</dbReference>
<dbReference type="NCBIfam" id="NF003661">
    <property type="entry name" value="PRK05291.1-3"/>
    <property type="match status" value="1"/>
</dbReference>
<dbReference type="NCBIfam" id="TIGR00231">
    <property type="entry name" value="small_GTP"/>
    <property type="match status" value="1"/>
</dbReference>
<dbReference type="PANTHER" id="PTHR42714">
    <property type="entry name" value="TRNA MODIFICATION GTPASE GTPBP3"/>
    <property type="match status" value="1"/>
</dbReference>
<dbReference type="PANTHER" id="PTHR42714:SF2">
    <property type="entry name" value="TRNA MODIFICATION GTPASE GTPBP3, MITOCHONDRIAL"/>
    <property type="match status" value="1"/>
</dbReference>
<dbReference type="Pfam" id="PF01926">
    <property type="entry name" value="MMR_HSR1"/>
    <property type="match status" value="1"/>
</dbReference>
<dbReference type="Pfam" id="PF12631">
    <property type="entry name" value="MnmE_helical"/>
    <property type="match status" value="1"/>
</dbReference>
<dbReference type="Pfam" id="PF10396">
    <property type="entry name" value="TrmE_N"/>
    <property type="match status" value="1"/>
</dbReference>
<dbReference type="PRINTS" id="PR00449">
    <property type="entry name" value="RASTRNSFRMNG"/>
</dbReference>
<dbReference type="SMART" id="SM00175">
    <property type="entry name" value="RAB"/>
    <property type="match status" value="1"/>
</dbReference>
<dbReference type="SUPFAM" id="SSF52540">
    <property type="entry name" value="P-loop containing nucleoside triphosphate hydrolases"/>
    <property type="match status" value="1"/>
</dbReference>
<dbReference type="PROSITE" id="PS51709">
    <property type="entry name" value="G_TRME"/>
    <property type="match status" value="1"/>
</dbReference>
<reference key="1">
    <citation type="journal article" date="2007" name="PLoS Genet.">
        <title>Patterns and implications of gene gain and loss in the evolution of Prochlorococcus.</title>
        <authorList>
            <person name="Kettler G.C."/>
            <person name="Martiny A.C."/>
            <person name="Huang K."/>
            <person name="Zucker J."/>
            <person name="Coleman M.L."/>
            <person name="Rodrigue S."/>
            <person name="Chen F."/>
            <person name="Lapidus A."/>
            <person name="Ferriera S."/>
            <person name="Johnson J."/>
            <person name="Steglich C."/>
            <person name="Church G.M."/>
            <person name="Richardson P."/>
            <person name="Chisholm S.W."/>
        </authorList>
    </citation>
    <scope>NUCLEOTIDE SEQUENCE [LARGE SCALE GENOMIC DNA]</scope>
    <source>
        <strain>NATL2A</strain>
    </source>
</reference>
<comment type="function">
    <text evidence="1">Exhibits a very high intrinsic GTPase hydrolysis rate. Involved in the addition of a carboxymethylaminomethyl (cmnm) group at the wobble position (U34) of certain tRNAs, forming tRNA-cmnm(5)s(2)U34.</text>
</comment>
<comment type="cofactor">
    <cofactor evidence="1">
        <name>K(+)</name>
        <dbReference type="ChEBI" id="CHEBI:29103"/>
    </cofactor>
    <text evidence="1">Binds 1 potassium ion per subunit.</text>
</comment>
<comment type="subunit">
    <text evidence="1">Homodimer. Heterotetramer of two MnmE and two MnmG subunits.</text>
</comment>
<comment type="subcellular location">
    <subcellularLocation>
        <location evidence="1">Cytoplasm</location>
    </subcellularLocation>
</comment>
<comment type="similarity">
    <text evidence="1">Belongs to the TRAFAC class TrmE-Era-EngA-EngB-Septin-like GTPase superfamily. TrmE GTPase family.</text>
</comment>
<keyword id="KW-0963">Cytoplasm</keyword>
<keyword id="KW-0342">GTP-binding</keyword>
<keyword id="KW-0378">Hydrolase</keyword>
<keyword id="KW-0460">Magnesium</keyword>
<keyword id="KW-0479">Metal-binding</keyword>
<keyword id="KW-0547">Nucleotide-binding</keyword>
<keyword id="KW-0630">Potassium</keyword>
<keyword id="KW-1185">Reference proteome</keyword>
<keyword id="KW-0819">tRNA processing</keyword>
<organism>
    <name type="scientific">Prochlorococcus marinus (strain NATL2A)</name>
    <dbReference type="NCBI Taxonomy" id="59920"/>
    <lineage>
        <taxon>Bacteria</taxon>
        <taxon>Bacillati</taxon>
        <taxon>Cyanobacteriota</taxon>
        <taxon>Cyanophyceae</taxon>
        <taxon>Synechococcales</taxon>
        <taxon>Prochlorococcaceae</taxon>
        <taxon>Prochlorococcus</taxon>
    </lineage>
</organism>
<feature type="chain" id="PRO_1000048851" description="tRNA modification GTPase MnmE">
    <location>
        <begin position="1"/>
        <end position="464"/>
    </location>
</feature>
<feature type="domain" description="TrmE-type G">
    <location>
        <begin position="226"/>
        <end position="387"/>
    </location>
</feature>
<feature type="binding site" evidence="1">
    <location>
        <position position="29"/>
    </location>
    <ligand>
        <name>(6S)-5-formyl-5,6,7,8-tetrahydrofolate</name>
        <dbReference type="ChEBI" id="CHEBI:57457"/>
    </ligand>
</feature>
<feature type="binding site" evidence="1">
    <location>
        <position position="91"/>
    </location>
    <ligand>
        <name>(6S)-5-formyl-5,6,7,8-tetrahydrofolate</name>
        <dbReference type="ChEBI" id="CHEBI:57457"/>
    </ligand>
</feature>
<feature type="binding site" evidence="1">
    <location>
        <position position="131"/>
    </location>
    <ligand>
        <name>(6S)-5-formyl-5,6,7,8-tetrahydrofolate</name>
        <dbReference type="ChEBI" id="CHEBI:57457"/>
    </ligand>
</feature>
<feature type="binding site" evidence="1">
    <location>
        <begin position="236"/>
        <end position="241"/>
    </location>
    <ligand>
        <name>GTP</name>
        <dbReference type="ChEBI" id="CHEBI:37565"/>
    </ligand>
</feature>
<feature type="binding site" evidence="1">
    <location>
        <position position="236"/>
    </location>
    <ligand>
        <name>K(+)</name>
        <dbReference type="ChEBI" id="CHEBI:29103"/>
    </ligand>
</feature>
<feature type="binding site" evidence="1">
    <location>
        <position position="240"/>
    </location>
    <ligand>
        <name>Mg(2+)</name>
        <dbReference type="ChEBI" id="CHEBI:18420"/>
    </ligand>
</feature>
<feature type="binding site" evidence="1">
    <location>
        <begin position="255"/>
        <end position="261"/>
    </location>
    <ligand>
        <name>GTP</name>
        <dbReference type="ChEBI" id="CHEBI:37565"/>
    </ligand>
</feature>
<feature type="binding site" evidence="1">
    <location>
        <position position="255"/>
    </location>
    <ligand>
        <name>K(+)</name>
        <dbReference type="ChEBI" id="CHEBI:29103"/>
    </ligand>
</feature>
<feature type="binding site" evidence="1">
    <location>
        <position position="257"/>
    </location>
    <ligand>
        <name>K(+)</name>
        <dbReference type="ChEBI" id="CHEBI:29103"/>
    </ligand>
</feature>
<feature type="binding site" evidence="1">
    <location>
        <position position="260"/>
    </location>
    <ligand>
        <name>K(+)</name>
        <dbReference type="ChEBI" id="CHEBI:29103"/>
    </ligand>
</feature>
<feature type="binding site" evidence="1">
    <location>
        <position position="261"/>
    </location>
    <ligand>
        <name>Mg(2+)</name>
        <dbReference type="ChEBI" id="CHEBI:18420"/>
    </ligand>
</feature>
<feature type="binding site" evidence="1">
    <location>
        <begin position="280"/>
        <end position="283"/>
    </location>
    <ligand>
        <name>GTP</name>
        <dbReference type="ChEBI" id="CHEBI:37565"/>
    </ligand>
</feature>
<feature type="binding site" evidence="1">
    <location>
        <position position="464"/>
    </location>
    <ligand>
        <name>(6S)-5-formyl-5,6,7,8-tetrahydrofolate</name>
        <dbReference type="ChEBI" id="CHEBI:57457"/>
    </ligand>
</feature>
<proteinExistence type="inferred from homology"/>
<sequence>MNSFSPTEDTIAAIATAVSPGQGSIAAIRISGSSAIETSKNIVDVPGIQDWSTHKVLYGHVTEENRKKYIDEVLILVMKGPRSFTGEDVVEIHCHGGIIPVQKILERILAFPSVRRAEPGEFSQRAVLNGRLSLTQAESISELVSARSRKAAELAINGIEGNIQTTIQSIRKRLIEQLTEIEARIDFEEDLPLLDEKHVKNEIVAIKKDLNELIDNAKRGSWVRSGLKVALTGKPNVGKSSLMNRLSKQEKAIVTDLPGTTRDILESEIILEGIPVTFIDTAGLRDTKDIIEKIGISRTKKTLIHADLIILIFDYSSGWTNEDESILKQLPINIPLLIVGNKSDLTNDQSFEKVPKYILKKENLVIISAKTGNGEDDLINYLLKKCGSSQTHGLDIALNERQLDLAKSTMKSLENINKVFDEKLPWDFWTIDLRQAINYLGELTGEDLTESLLDNIFSKFCIGK</sequence>